<organism>
    <name type="scientific">Listeria innocua serovar 6a (strain ATCC BAA-680 / CLIP 11262)</name>
    <dbReference type="NCBI Taxonomy" id="272626"/>
    <lineage>
        <taxon>Bacteria</taxon>
        <taxon>Bacillati</taxon>
        <taxon>Bacillota</taxon>
        <taxon>Bacilli</taxon>
        <taxon>Bacillales</taxon>
        <taxon>Listeriaceae</taxon>
        <taxon>Listeria</taxon>
    </lineage>
</organism>
<evidence type="ECO:0000255" key="1">
    <source>
        <dbReference type="HAMAP-Rule" id="MF_00173"/>
    </source>
</evidence>
<gene>
    <name evidence="1" type="primary">argR</name>
    <name type="ordered locus">lin1404</name>
</gene>
<comment type="function">
    <text evidence="1">Regulates arginine biosynthesis genes.</text>
</comment>
<comment type="pathway">
    <text>Amino-acid biosynthesis; L-arginine biosynthesis [regulation].</text>
</comment>
<comment type="subcellular location">
    <subcellularLocation>
        <location evidence="1">Cytoplasm</location>
    </subcellularLocation>
</comment>
<comment type="similarity">
    <text evidence="1">Belongs to the ArgR family.</text>
</comment>
<dbReference type="EMBL" id="AL596168">
    <property type="protein sequence ID" value="CAC96635.1"/>
    <property type="molecule type" value="Genomic_DNA"/>
</dbReference>
<dbReference type="PIR" id="AC1608">
    <property type="entry name" value="AC1608"/>
</dbReference>
<dbReference type="RefSeq" id="WP_010991517.1">
    <property type="nucleotide sequence ID" value="NC_003212.1"/>
</dbReference>
<dbReference type="SMR" id="Q92BY8"/>
<dbReference type="STRING" id="272626.gene:17565735"/>
<dbReference type="KEGG" id="lin:lin1404"/>
<dbReference type="eggNOG" id="COG1438">
    <property type="taxonomic scope" value="Bacteria"/>
</dbReference>
<dbReference type="HOGENOM" id="CLU_097103_3_0_9"/>
<dbReference type="OrthoDB" id="9807089at2"/>
<dbReference type="UniPathway" id="UPA00068"/>
<dbReference type="Proteomes" id="UP000002513">
    <property type="component" value="Chromosome"/>
</dbReference>
<dbReference type="GO" id="GO:0005737">
    <property type="term" value="C:cytoplasm"/>
    <property type="evidence" value="ECO:0007669"/>
    <property type="project" value="UniProtKB-SubCell"/>
</dbReference>
<dbReference type="GO" id="GO:0034618">
    <property type="term" value="F:arginine binding"/>
    <property type="evidence" value="ECO:0007669"/>
    <property type="project" value="InterPro"/>
</dbReference>
<dbReference type="GO" id="GO:0003677">
    <property type="term" value="F:DNA binding"/>
    <property type="evidence" value="ECO:0007669"/>
    <property type="project" value="UniProtKB-KW"/>
</dbReference>
<dbReference type="GO" id="GO:0003700">
    <property type="term" value="F:DNA-binding transcription factor activity"/>
    <property type="evidence" value="ECO:0007669"/>
    <property type="project" value="UniProtKB-UniRule"/>
</dbReference>
<dbReference type="GO" id="GO:0006526">
    <property type="term" value="P:L-arginine biosynthetic process"/>
    <property type="evidence" value="ECO:0007669"/>
    <property type="project" value="UniProtKB-UniPathway"/>
</dbReference>
<dbReference type="GO" id="GO:0051259">
    <property type="term" value="P:protein complex oligomerization"/>
    <property type="evidence" value="ECO:0007669"/>
    <property type="project" value="InterPro"/>
</dbReference>
<dbReference type="GO" id="GO:1900079">
    <property type="term" value="P:regulation of arginine biosynthetic process"/>
    <property type="evidence" value="ECO:0007669"/>
    <property type="project" value="UniProtKB-UniRule"/>
</dbReference>
<dbReference type="Gene3D" id="3.30.1360.40">
    <property type="match status" value="1"/>
</dbReference>
<dbReference type="Gene3D" id="1.10.10.10">
    <property type="entry name" value="Winged helix-like DNA-binding domain superfamily/Winged helix DNA-binding domain"/>
    <property type="match status" value="1"/>
</dbReference>
<dbReference type="HAMAP" id="MF_00173">
    <property type="entry name" value="Arg_repressor"/>
    <property type="match status" value="1"/>
</dbReference>
<dbReference type="InterPro" id="IPR001669">
    <property type="entry name" value="Arg_repress"/>
</dbReference>
<dbReference type="InterPro" id="IPR020899">
    <property type="entry name" value="Arg_repress_C"/>
</dbReference>
<dbReference type="InterPro" id="IPR036251">
    <property type="entry name" value="Arg_repress_C_sf"/>
</dbReference>
<dbReference type="InterPro" id="IPR020900">
    <property type="entry name" value="Arg_repress_DNA-bd"/>
</dbReference>
<dbReference type="InterPro" id="IPR036388">
    <property type="entry name" value="WH-like_DNA-bd_sf"/>
</dbReference>
<dbReference type="InterPro" id="IPR036390">
    <property type="entry name" value="WH_DNA-bd_sf"/>
</dbReference>
<dbReference type="NCBIfam" id="TIGR01529">
    <property type="entry name" value="argR_whole"/>
    <property type="match status" value="1"/>
</dbReference>
<dbReference type="NCBIfam" id="NF003281">
    <property type="entry name" value="PRK04280.1"/>
    <property type="match status" value="1"/>
</dbReference>
<dbReference type="PANTHER" id="PTHR34471">
    <property type="entry name" value="ARGININE REPRESSOR"/>
    <property type="match status" value="1"/>
</dbReference>
<dbReference type="PANTHER" id="PTHR34471:SF1">
    <property type="entry name" value="ARGININE REPRESSOR"/>
    <property type="match status" value="1"/>
</dbReference>
<dbReference type="Pfam" id="PF01316">
    <property type="entry name" value="Arg_repressor"/>
    <property type="match status" value="1"/>
</dbReference>
<dbReference type="Pfam" id="PF02863">
    <property type="entry name" value="Arg_repressor_C"/>
    <property type="match status" value="1"/>
</dbReference>
<dbReference type="PRINTS" id="PR01467">
    <property type="entry name" value="ARGREPRESSOR"/>
</dbReference>
<dbReference type="SUPFAM" id="SSF55252">
    <property type="entry name" value="C-terminal domain of arginine repressor"/>
    <property type="match status" value="1"/>
</dbReference>
<dbReference type="SUPFAM" id="SSF46785">
    <property type="entry name" value="Winged helix' DNA-binding domain"/>
    <property type="match status" value="1"/>
</dbReference>
<feature type="chain" id="PRO_0000205097" description="Arginine repressor">
    <location>
        <begin position="1"/>
        <end position="149"/>
    </location>
</feature>
<sequence length="149" mass="16811">MNKGHRHIIIRELITSNEIDTQEDLVELLLERDVKVTQATVSRDIKELHLVKVPTQTGGYKYSLPADNSFNPHQKLKRALIDCFICIDTVQFMIILKVMPGNGNSVGALIDNLDWPEKAGTLCGDDTCLIICRSEENAKTLTDRFIDML</sequence>
<reference key="1">
    <citation type="journal article" date="2001" name="Science">
        <title>Comparative genomics of Listeria species.</title>
        <authorList>
            <person name="Glaser P."/>
            <person name="Frangeul L."/>
            <person name="Buchrieser C."/>
            <person name="Rusniok C."/>
            <person name="Amend A."/>
            <person name="Baquero F."/>
            <person name="Berche P."/>
            <person name="Bloecker H."/>
            <person name="Brandt P."/>
            <person name="Chakraborty T."/>
            <person name="Charbit A."/>
            <person name="Chetouani F."/>
            <person name="Couve E."/>
            <person name="de Daruvar A."/>
            <person name="Dehoux P."/>
            <person name="Domann E."/>
            <person name="Dominguez-Bernal G."/>
            <person name="Duchaud E."/>
            <person name="Durant L."/>
            <person name="Dussurget O."/>
            <person name="Entian K.-D."/>
            <person name="Fsihi H."/>
            <person name="Garcia-del Portillo F."/>
            <person name="Garrido P."/>
            <person name="Gautier L."/>
            <person name="Goebel W."/>
            <person name="Gomez-Lopez N."/>
            <person name="Hain T."/>
            <person name="Hauf J."/>
            <person name="Jackson D."/>
            <person name="Jones L.-M."/>
            <person name="Kaerst U."/>
            <person name="Kreft J."/>
            <person name="Kuhn M."/>
            <person name="Kunst F."/>
            <person name="Kurapkat G."/>
            <person name="Madueno E."/>
            <person name="Maitournam A."/>
            <person name="Mata Vicente J."/>
            <person name="Ng E."/>
            <person name="Nedjari H."/>
            <person name="Nordsiek G."/>
            <person name="Novella S."/>
            <person name="de Pablos B."/>
            <person name="Perez-Diaz J.-C."/>
            <person name="Purcell R."/>
            <person name="Remmel B."/>
            <person name="Rose M."/>
            <person name="Schlueter T."/>
            <person name="Simoes N."/>
            <person name="Tierrez A."/>
            <person name="Vazquez-Boland J.-A."/>
            <person name="Voss H."/>
            <person name="Wehland J."/>
            <person name="Cossart P."/>
        </authorList>
    </citation>
    <scope>NUCLEOTIDE SEQUENCE [LARGE SCALE GENOMIC DNA]</scope>
    <source>
        <strain>ATCC BAA-680 / CLIP 11262</strain>
    </source>
</reference>
<name>ARGR_LISIN</name>
<protein>
    <recommendedName>
        <fullName evidence="1">Arginine repressor</fullName>
    </recommendedName>
</protein>
<accession>Q92BY8</accession>
<proteinExistence type="inferred from homology"/>
<keyword id="KW-0028">Amino-acid biosynthesis</keyword>
<keyword id="KW-0055">Arginine biosynthesis</keyword>
<keyword id="KW-0963">Cytoplasm</keyword>
<keyword id="KW-0238">DNA-binding</keyword>
<keyword id="KW-0678">Repressor</keyword>
<keyword id="KW-0804">Transcription</keyword>
<keyword id="KW-0805">Transcription regulation</keyword>